<reference key="1">
    <citation type="journal article" date="2012" name="PLoS ONE">
        <title>Characterization of profilin polymorphism in pollen with a focus on multifunctionality.</title>
        <authorList>
            <person name="Jimenez-Lopez J.C."/>
            <person name="Morales S."/>
            <person name="Castro A.J."/>
            <person name="Volkmann D."/>
            <person name="Rodriguez-Garcia M.I."/>
            <person name="Alche Jde D."/>
        </authorList>
    </citation>
    <scope>NUCLEOTIDE SEQUENCE [MRNA]</scope>
    <scope>POLYMORPHISM</scope>
    <source>
        <strain>cv. Hojiblanca</strain>
        <tissue>Pollen</tissue>
    </source>
</reference>
<reference key="2">
    <citation type="journal article" date="2013" name="PLoS ONE">
        <title>Analysis of the effects of polymorphism on pollen profilin structural functionality and the generation of conformational, T- and B-cell epitopes.</title>
        <authorList>
            <person name="Jimenez-Lopez J.C."/>
            <person name="Rodriguez-Garcia M.I."/>
            <person name="Alche J.D."/>
        </authorList>
    </citation>
    <scope>3D-STRUCTURE MODELING</scope>
    <scope>DISULFIDE BOND</scope>
</reference>
<name>PROFQ_OLEEU</name>
<evidence type="ECO:0000250" key="1"/>
<evidence type="ECO:0000305" key="2"/>
<evidence type="ECO:0000305" key="3">
    <source>
    </source>
</evidence>
<accession>A4GCR8</accession>
<proteinExistence type="evidence at protein level"/>
<organism>
    <name type="scientific">Olea europaea</name>
    <name type="common">Common olive</name>
    <dbReference type="NCBI Taxonomy" id="4146"/>
    <lineage>
        <taxon>Eukaryota</taxon>
        <taxon>Viridiplantae</taxon>
        <taxon>Streptophyta</taxon>
        <taxon>Embryophyta</taxon>
        <taxon>Tracheophyta</taxon>
        <taxon>Spermatophyta</taxon>
        <taxon>Magnoliopsida</taxon>
        <taxon>eudicotyledons</taxon>
        <taxon>Gunneridae</taxon>
        <taxon>Pentapetalae</taxon>
        <taxon>asterids</taxon>
        <taxon>lamiids</taxon>
        <taxon>Lamiales</taxon>
        <taxon>Oleaceae</taxon>
        <taxon>Oleeae</taxon>
        <taxon>Olea</taxon>
    </lineage>
</organism>
<protein>
    <recommendedName>
        <fullName>Profilin-2</fullName>
    </recommendedName>
    <alternativeName>
        <fullName>Pollen allergen Ole e 2</fullName>
    </alternativeName>
    <allergenName>Ole e 2</allergenName>
</protein>
<sequence>MSWQAYVDDHLMCDIEDHEGHRLTAAAIVGHDGSVWAQSATFPQFKPEEMNGIMTDFNEPGHLAPTGLHLGGTKYMVIQGEAGAVIRGKKGSGGITIKKTGQALVFGIYEEPVTPGQCNMVVKRLGDYLLEQGL</sequence>
<feature type="initiator methionine" description="Removed" evidence="1">
    <location>
        <position position="1"/>
    </location>
</feature>
<feature type="chain" id="PRO_0000424982" description="Profilin-2">
    <location>
        <begin position="2"/>
        <end position="134"/>
    </location>
</feature>
<feature type="short sequence motif" description="Involved in PIP2 interaction">
    <location>
        <begin position="84"/>
        <end position="100"/>
    </location>
</feature>
<feature type="modified residue" description="Phosphothreonine" evidence="1">
    <location>
        <position position="114"/>
    </location>
</feature>
<feature type="disulfide bond" evidence="3">
    <location>
        <begin position="13"/>
        <end position="118"/>
    </location>
</feature>
<keyword id="KW-0009">Actin-binding</keyword>
<keyword id="KW-0020">Allergen</keyword>
<keyword id="KW-0963">Cytoplasm</keyword>
<keyword id="KW-0206">Cytoskeleton</keyword>
<keyword id="KW-1015">Disulfide bond</keyword>
<keyword id="KW-0597">Phosphoprotein</keyword>
<comment type="function">
    <text evidence="1">Binds to actin and affects the structure of the cytoskeleton. At high concentrations, profilin prevents the polymerization of actin, whereas it enhances it at low concentrations (By similarity).</text>
</comment>
<comment type="subunit">
    <text evidence="1">Occurs in many kinds of cells as a complex with monomeric actin in a 1:1 ratio.</text>
</comment>
<comment type="subcellular location">
    <subcellularLocation>
        <location evidence="1">Cytoplasm</location>
        <location evidence="1">Cytoskeleton</location>
    </subcellularLocation>
</comment>
<comment type="PTM">
    <text evidence="1">Phosphorylated by MAP kinases.</text>
</comment>
<comment type="polymorphism">
    <text>Several isoforms of the allergen exist due to polymorphism.</text>
</comment>
<comment type="allergen">
    <text>Causes an allergic reaction in human.</text>
</comment>
<comment type="miscellaneous">
    <text evidence="3">The variability of the residues taking part of IgE-binding epitopes might be responsible of the difference in cross-reactivity among olive pollen cultivars, and between distantly related pollen species, leading to a variable range of allergy reactions among atopic patients.</text>
</comment>
<comment type="similarity">
    <text evidence="2">Belongs to the profilin family.</text>
</comment>
<dbReference type="EMBL" id="DQ061979">
    <property type="protein sequence ID" value="AAZ08567.1"/>
    <property type="molecule type" value="mRNA"/>
</dbReference>
<dbReference type="SMR" id="A4GCR8"/>
<dbReference type="Allergome" id="490">
    <property type="allergen name" value="Ole e 2"/>
</dbReference>
<dbReference type="GO" id="GO:0005938">
    <property type="term" value="C:cell cortex"/>
    <property type="evidence" value="ECO:0007669"/>
    <property type="project" value="TreeGrafter"/>
</dbReference>
<dbReference type="GO" id="GO:0005856">
    <property type="term" value="C:cytoskeleton"/>
    <property type="evidence" value="ECO:0007669"/>
    <property type="project" value="UniProtKB-SubCell"/>
</dbReference>
<dbReference type="GO" id="GO:0003785">
    <property type="term" value="F:actin monomer binding"/>
    <property type="evidence" value="ECO:0007669"/>
    <property type="project" value="TreeGrafter"/>
</dbReference>
<dbReference type="CDD" id="cd00148">
    <property type="entry name" value="PROF"/>
    <property type="match status" value="1"/>
</dbReference>
<dbReference type="FunFam" id="3.30.450.30:FF:000001">
    <property type="entry name" value="Profilin"/>
    <property type="match status" value="1"/>
</dbReference>
<dbReference type="Gene3D" id="3.30.450.30">
    <property type="entry name" value="Dynein light chain 2a, cytoplasmic"/>
    <property type="match status" value="1"/>
</dbReference>
<dbReference type="InterPro" id="IPR048278">
    <property type="entry name" value="PFN"/>
</dbReference>
<dbReference type="InterPro" id="IPR005455">
    <property type="entry name" value="PFN_euk"/>
</dbReference>
<dbReference type="InterPro" id="IPR036140">
    <property type="entry name" value="PFN_sf"/>
</dbReference>
<dbReference type="InterPro" id="IPR027310">
    <property type="entry name" value="Profilin_CS"/>
</dbReference>
<dbReference type="PANTHER" id="PTHR11604">
    <property type="entry name" value="PROFILIN"/>
    <property type="match status" value="1"/>
</dbReference>
<dbReference type="PANTHER" id="PTHR11604:SF25">
    <property type="entry name" value="PROFILIN-5"/>
    <property type="match status" value="1"/>
</dbReference>
<dbReference type="Pfam" id="PF00235">
    <property type="entry name" value="Profilin"/>
    <property type="match status" value="1"/>
</dbReference>
<dbReference type="PRINTS" id="PR00392">
    <property type="entry name" value="PROFILIN"/>
</dbReference>
<dbReference type="PRINTS" id="PR01640">
    <property type="entry name" value="PROFILINPLNT"/>
</dbReference>
<dbReference type="SMART" id="SM00392">
    <property type="entry name" value="PROF"/>
    <property type="match status" value="1"/>
</dbReference>
<dbReference type="SUPFAM" id="SSF55770">
    <property type="entry name" value="Profilin (actin-binding protein)"/>
    <property type="match status" value="1"/>
</dbReference>
<dbReference type="PROSITE" id="PS00414">
    <property type="entry name" value="PROFILIN"/>
    <property type="match status" value="1"/>
</dbReference>